<accession>Q5DU99</accession>
<name>PRE3_MAMLE</name>
<gene>
    <name type="primary">pre</name>
</gene>
<comment type="function">
    <text evidence="1">The interaction of the RSA site and the PRE protein may not only serves a function in plasmid maintenance, but may also contributes to the distribution of small antibiotic resistance plasmids among Gram-positive bacteria.</text>
</comment>
<comment type="miscellaneous">
    <text evidence="1">Contains conserved positively charged amino acids probably involved in the binding of the pre protein to the RSA site.</text>
</comment>
<comment type="similarity">
    <text evidence="4">Belongs to the plasmid mobilization pre family.</text>
</comment>
<protein>
    <recommendedName>
        <fullName>Plasmid recombination enzyme type 3</fullName>
    </recommendedName>
    <alternativeName>
        <fullName>Mobilization protein</fullName>
    </alternativeName>
    <alternativeName>
        <fullName>Plasmid recombinase</fullName>
    </alternativeName>
</protein>
<feature type="chain" id="PRO_0000224929" description="Plasmid recombination enzyme type 3">
    <location>
        <begin position="1"/>
        <end position="413"/>
    </location>
</feature>
<feature type="region of interest" description="Disordered" evidence="3">
    <location>
        <begin position="179"/>
        <end position="218"/>
    </location>
</feature>
<feature type="region of interest" description="Disordered" evidence="3">
    <location>
        <begin position="374"/>
        <end position="413"/>
    </location>
</feature>
<feature type="compositionally biased region" description="Basic and acidic residues" evidence="3">
    <location>
        <begin position="188"/>
        <end position="218"/>
    </location>
</feature>
<feature type="compositionally biased region" description="Basic and acidic residues" evidence="3">
    <location>
        <begin position="403"/>
        <end position="413"/>
    </location>
</feature>
<feature type="binding site" evidence="2">
    <location>
        <position position="45"/>
    </location>
    <ligand>
        <name>DNA</name>
        <dbReference type="ChEBI" id="CHEBI:16991"/>
    </ligand>
</feature>
<feature type="binding site" evidence="2">
    <location>
        <position position="115"/>
    </location>
    <ligand>
        <name>DNA</name>
        <dbReference type="ChEBI" id="CHEBI:16991"/>
    </ligand>
</feature>
<keyword id="KW-0238">DNA-binding</keyword>
<keyword id="KW-0614">Plasmid</keyword>
<reference key="1">
    <citation type="journal article" date="2005" name="J. Antimicrob. Chemother.">
        <title>Staphylococcal tetracycline-MLSB resistance plasmid pSTE2 is the product of an RSA-mediated in vivo recombination.</title>
        <authorList>
            <person name="Hauschild T."/>
            <person name="Luehtje P."/>
            <person name="Schwarz S."/>
        </authorList>
    </citation>
    <scope>NUCLEOTIDE SEQUENCE [GENOMIC DNA]</scope>
    <source>
        <strain>44</strain>
    </source>
</reference>
<organism>
    <name type="scientific">Mammaliicoccus lentus</name>
    <name type="common">Staphylococcus lentus</name>
    <dbReference type="NCBI Taxonomy" id="42858"/>
    <lineage>
        <taxon>Bacteria</taxon>
        <taxon>Bacillati</taxon>
        <taxon>Bacillota</taxon>
        <taxon>Bacilli</taxon>
        <taxon>Bacillales</taxon>
        <taxon>Staphylococcaceae</taxon>
        <taxon>Mammaliicoccus</taxon>
    </lineage>
</organism>
<sequence length="413" mass="48526">MSYSIVRVSKVKSGTNTTGIQKHVQRENNNYENEDIDHSKTYLNYDLVNANKQNFNNLIDEKIEQNYTGKRKIRTDAIKHIDGLITSDNDFFDNQTPEDTKQFFEYAKEFLEQEYGKDNLLYATVHMDEKTPHMHYGVVPITDDGRLSAKEVVGNKKALTAFQDRFNEHVKQRGYDLERGQSRQVTNAKHEQISQYKQKTEYHKQEYERESQKTDHIKQKNDKLMQEYQKSLNTLKKPINVPYEQETEKVGGLFSKEIQETGNVVISQKDFNEFQKQIKAAQDISEDYEYIKSGRALDDKDKEIREKDDLLNKAVERIENADDNFNQLYENAKPLKENIEIALKLLKILLKELERVLGRNTFAERVNKLTEDEPKLNGLAGNLDKKMNPELYSEQEQQQEQQKNQKRDRGMHL</sequence>
<proteinExistence type="inferred from homology"/>
<geneLocation type="plasmid">
    <name>pSTE2</name>
</geneLocation>
<evidence type="ECO:0000250" key="1"/>
<evidence type="ECO:0000255" key="2"/>
<evidence type="ECO:0000256" key="3">
    <source>
        <dbReference type="SAM" id="MobiDB-lite"/>
    </source>
</evidence>
<evidence type="ECO:0000305" key="4"/>
<dbReference type="EMBL" id="AJ888003">
    <property type="protein sequence ID" value="CAI59790.1"/>
    <property type="molecule type" value="Genomic_DNA"/>
</dbReference>
<dbReference type="RefSeq" id="YP_209655.1">
    <property type="nucleotide sequence ID" value="NC_006871.1"/>
</dbReference>
<dbReference type="SMR" id="Q5DU99"/>
<dbReference type="GO" id="GO:0003677">
    <property type="term" value="F:DNA binding"/>
    <property type="evidence" value="ECO:0007669"/>
    <property type="project" value="UniProtKB-KW"/>
</dbReference>
<dbReference type="GO" id="GO:0006310">
    <property type="term" value="P:DNA recombination"/>
    <property type="evidence" value="ECO:0007669"/>
    <property type="project" value="InterPro"/>
</dbReference>
<dbReference type="CDD" id="cd17242">
    <property type="entry name" value="MobM_relaxase"/>
    <property type="match status" value="1"/>
</dbReference>
<dbReference type="Gene3D" id="3.30.930.30">
    <property type="match status" value="1"/>
</dbReference>
<dbReference type="InterPro" id="IPR001668">
    <property type="entry name" value="Mob_Pre"/>
</dbReference>
<dbReference type="NCBIfam" id="NF041497">
    <property type="entry name" value="MobV"/>
    <property type="match status" value="1"/>
</dbReference>
<dbReference type="Pfam" id="PF01076">
    <property type="entry name" value="Mob_Pre"/>
    <property type="match status" value="1"/>
</dbReference>